<accession>Q9M9H4</accession>
<accession>K7YLJ7</accession>
<accession>Q56XP0</accession>
<dbReference type="EMBL" id="JX843767">
    <property type="protein sequence ID" value="AFX82591.1"/>
    <property type="molecule type" value="mRNA"/>
</dbReference>
<dbReference type="EMBL" id="AC012654">
    <property type="protein sequence ID" value="AAF43225.1"/>
    <property type="molecule type" value="Genomic_DNA"/>
</dbReference>
<dbReference type="EMBL" id="CP002684">
    <property type="protein sequence ID" value="AEE35223.1"/>
    <property type="molecule type" value="Genomic_DNA"/>
</dbReference>
<dbReference type="EMBL" id="AK221633">
    <property type="protein sequence ID" value="BAD95265.1"/>
    <property type="status" value="ALT_FRAME"/>
    <property type="molecule type" value="mRNA"/>
</dbReference>
<dbReference type="PIR" id="E96739">
    <property type="entry name" value="E96739"/>
</dbReference>
<dbReference type="RefSeq" id="NP_177317.2">
    <molecule id="Q9M9H4-1"/>
    <property type="nucleotide sequence ID" value="NM_105830.4"/>
</dbReference>
<dbReference type="SMR" id="Q9M9H4"/>
<dbReference type="FunCoup" id="Q9M9H4">
    <property type="interactions" value="924"/>
</dbReference>
<dbReference type="STRING" id="3702.Q9M9H4"/>
<dbReference type="iPTMnet" id="Q9M9H4"/>
<dbReference type="PaxDb" id="3702-AT1G71720.1"/>
<dbReference type="ProteomicsDB" id="179181">
    <molecule id="Q9M9H4-1"/>
</dbReference>
<dbReference type="EnsemblPlants" id="AT1G71720.1">
    <molecule id="Q9M9H4-1"/>
    <property type="protein sequence ID" value="AT1G71720.1"/>
    <property type="gene ID" value="AT1G71720"/>
</dbReference>
<dbReference type="GeneID" id="843502"/>
<dbReference type="Gramene" id="AT1G71720.1">
    <molecule id="Q9M9H4-1"/>
    <property type="protein sequence ID" value="AT1G71720.1"/>
    <property type="gene ID" value="AT1G71720"/>
</dbReference>
<dbReference type="KEGG" id="ath:AT1G71720"/>
<dbReference type="Araport" id="AT1G71720"/>
<dbReference type="TAIR" id="AT1G71720">
    <property type="gene designation" value="PDE338"/>
</dbReference>
<dbReference type="eggNOG" id="ENOG502QTBZ">
    <property type="taxonomic scope" value="Eukaryota"/>
</dbReference>
<dbReference type="HOGENOM" id="CLU_026267_0_0_1"/>
<dbReference type="InParanoid" id="Q9M9H4"/>
<dbReference type="OMA" id="MDEAKND"/>
<dbReference type="PRO" id="PR:Q9M9H4"/>
<dbReference type="Proteomes" id="UP000006548">
    <property type="component" value="Chromosome 1"/>
</dbReference>
<dbReference type="ExpressionAtlas" id="Q9M9H4">
    <property type="expression patterns" value="baseline and differential"/>
</dbReference>
<dbReference type="GO" id="GO:0009507">
    <property type="term" value="C:chloroplast"/>
    <property type="evidence" value="ECO:0000314"/>
    <property type="project" value="UniProtKB"/>
</dbReference>
<dbReference type="GO" id="GO:0005739">
    <property type="term" value="C:mitochondrion"/>
    <property type="evidence" value="ECO:0007005"/>
    <property type="project" value="TAIR"/>
</dbReference>
<dbReference type="GO" id="GO:0009536">
    <property type="term" value="C:plastid"/>
    <property type="evidence" value="ECO:0000314"/>
    <property type="project" value="TAIR"/>
</dbReference>
<dbReference type="GO" id="GO:0034336">
    <property type="term" value="F:misfolded RNA binding"/>
    <property type="evidence" value="ECO:0000314"/>
    <property type="project" value="TAIR"/>
</dbReference>
<dbReference type="GO" id="GO:0003729">
    <property type="term" value="F:mRNA binding"/>
    <property type="evidence" value="ECO:0000314"/>
    <property type="project" value="UniProtKB"/>
</dbReference>
<dbReference type="GO" id="GO:0140691">
    <property type="term" value="F:RNA folding chaperone"/>
    <property type="evidence" value="ECO:0000314"/>
    <property type="project" value="TAIR"/>
</dbReference>
<dbReference type="GO" id="GO:0010196">
    <property type="term" value="P:nonphotochemical quenching"/>
    <property type="evidence" value="ECO:0000315"/>
    <property type="project" value="UniProtKB"/>
</dbReference>
<dbReference type="GO" id="GO:0009657">
    <property type="term" value="P:plastid organization"/>
    <property type="evidence" value="ECO:0000315"/>
    <property type="project" value="TAIR"/>
</dbReference>
<dbReference type="GO" id="GO:0032544">
    <property type="term" value="P:plastid translation"/>
    <property type="evidence" value="ECO:0000315"/>
    <property type="project" value="TAIR"/>
</dbReference>
<dbReference type="GO" id="GO:0045727">
    <property type="term" value="P:positive regulation of translation"/>
    <property type="evidence" value="ECO:0000314"/>
    <property type="project" value="UniProtKB"/>
</dbReference>
<dbReference type="GO" id="GO:0009416">
    <property type="term" value="P:response to light stimulus"/>
    <property type="evidence" value="ECO:0000270"/>
    <property type="project" value="UniProtKB"/>
</dbReference>
<dbReference type="GO" id="GO:0043489">
    <property type="term" value="P:RNA stabilization"/>
    <property type="evidence" value="ECO:0000315"/>
    <property type="project" value="UniProtKB"/>
</dbReference>
<dbReference type="CDD" id="cd04465">
    <property type="entry name" value="S1_RPS1_repeat_ec2_hs2"/>
    <property type="match status" value="1"/>
</dbReference>
<dbReference type="FunFam" id="2.40.50.140:FF:000354">
    <property type="entry name" value="ATP-dependent RNA helicase DHX8"/>
    <property type="match status" value="1"/>
</dbReference>
<dbReference type="Gene3D" id="2.40.50.140">
    <property type="entry name" value="Nucleic acid-binding proteins"/>
    <property type="match status" value="1"/>
</dbReference>
<dbReference type="InterPro" id="IPR012340">
    <property type="entry name" value="NA-bd_OB-fold"/>
</dbReference>
<dbReference type="InterPro" id="IPR003029">
    <property type="entry name" value="S1_domain"/>
</dbReference>
<dbReference type="PANTHER" id="PTHR15838">
    <property type="entry name" value="NUCLEOLAR PROTEIN OF 40 KDA"/>
    <property type="match status" value="1"/>
</dbReference>
<dbReference type="PANTHER" id="PTHR15838:SF3">
    <property type="entry name" value="PROTEIN PIGMENT DEFECTIVE 338, CHLOROPLASTIC"/>
    <property type="match status" value="1"/>
</dbReference>
<dbReference type="Pfam" id="PF00575">
    <property type="entry name" value="S1"/>
    <property type="match status" value="1"/>
</dbReference>
<dbReference type="SMART" id="SM00316">
    <property type="entry name" value="S1"/>
    <property type="match status" value="3"/>
</dbReference>
<dbReference type="SUPFAM" id="SSF50249">
    <property type="entry name" value="Nucleic acid-binding proteins"/>
    <property type="match status" value="3"/>
</dbReference>
<dbReference type="PROSITE" id="PS50126">
    <property type="entry name" value="S1"/>
    <property type="match status" value="2"/>
</dbReference>
<gene>
    <name evidence="7" type="primary">PDE338</name>
    <name evidence="10" type="synonym">BSF</name>
    <name evidence="9" type="synonym">PBR1</name>
    <name evidence="8" type="synonym">RLSB</name>
    <name evidence="12" type="ordered locus">At1g71720</name>
    <name evidence="13" type="ORF">F14O23.10</name>
</gene>
<organism>
    <name type="scientific">Arabidopsis thaliana</name>
    <name type="common">Mouse-ear cress</name>
    <dbReference type="NCBI Taxonomy" id="3702"/>
    <lineage>
        <taxon>Eukaryota</taxon>
        <taxon>Viridiplantae</taxon>
        <taxon>Streptophyta</taxon>
        <taxon>Embryophyta</taxon>
        <taxon>Tracheophyta</taxon>
        <taxon>Spermatophyta</taxon>
        <taxon>Magnoliopsida</taxon>
        <taxon>eudicotyledons</taxon>
        <taxon>Gunneridae</taxon>
        <taxon>Pentapetalae</taxon>
        <taxon>rosids</taxon>
        <taxon>malvids</taxon>
        <taxon>Brassicales</taxon>
        <taxon>Brassicaceae</taxon>
        <taxon>Camelineae</taxon>
        <taxon>Arabidopsis</taxon>
    </lineage>
</organism>
<feature type="transit peptide" description="Chloroplast" evidence="1">
    <location>
        <begin position="1"/>
        <end position="63"/>
    </location>
</feature>
<feature type="chain" id="PRO_0000448439" description="Protein PIGMENT DEFECTIVE 338, chloroplastic" evidence="1">
    <location>
        <begin position="64"/>
        <end position="500"/>
    </location>
</feature>
<feature type="domain" description="S1 motif 1" evidence="2">
    <location>
        <begin position="156"/>
        <end position="265"/>
    </location>
</feature>
<feature type="domain" description="S1 motif 2" evidence="2">
    <location>
        <begin position="283"/>
        <end position="351"/>
    </location>
</feature>
<feature type="domain" description="S1 motif 3" evidence="2">
    <location>
        <begin position="362"/>
        <end position="431"/>
    </location>
</feature>
<feature type="splice variant" id="VSP_060396" description="In isoform 2.">
    <location>
        <begin position="315"/>
        <end position="327"/>
    </location>
</feature>
<comment type="function">
    <text evidence="3 4 5 6">RNA-binding protein that acts as an RNA chaperone to remodel RNA structure and activates their translation (PubMed:30962391). Required for seed pigmentation (PubMed:21139083). Necessary for chloroplast development and subsequent photosynthetic electron flow, as well as for non-photochemical quenching (NPQ) (PubMed:27462450). Rubisco regulatory factor which regulates the concerted biogenesis of NDH, PSI (including PsaA, PsaB, PsaD, PsaF, PsaL, PsaG, PsaK and NdhH) and Cytb(6)f (including PetA, PetB, PetC and PetD) complexes (PubMed:24053212, PubMed:27462450, PubMed:30962391). Binds specifically to and involved in the post-transcriptional regulation of plastid-encoded mRNAs (e.g. rbcL, petA, petB, petD and Ycf1), thus modulating expression, cellular localization/compartmentalization, and photosynthetic function (PubMed:24053212, PubMed:27462450, PubMed:30962391).</text>
</comment>
<comment type="subunit">
    <text evidence="6">Interacts with CRP1 and PRFB3.</text>
</comment>
<comment type="subcellular location">
    <subcellularLocation>
        <location evidence="4 6">Plastid</location>
        <location evidence="4 6">Chloroplast</location>
    </subcellularLocation>
</comment>
<comment type="alternative products">
    <event type="alternative splicing"/>
    <isoform>
        <id>Q9M9H4-1</id>
        <name>1</name>
        <sequence type="displayed"/>
    </isoform>
    <isoform>
        <id>Q9M9H4-2</id>
        <name>2</name>
        <sequence type="described" ref="VSP_060396"/>
    </isoform>
</comment>
<comment type="tissue specificity">
    <text evidence="4 6">Present in leaves (at protein level) (PubMed:30962391). Confined to leaf chlorenchyma cells (PubMed:24053212).</text>
</comment>
<comment type="induction">
    <text evidence="5">By light.</text>
</comment>
<comment type="disruption phenotype">
    <text evidence="3 4 5 6">Pigment defective seeds (PubMed:21139083). Virescent/yellow leaves leading to pale-green seedlings, due to reduced photosynthetic function and disruption of associated signaling networks, later associated with impaired photoautotrophy (PubMed:24053212, PubMed:27462450, PubMed:30962391). Abnormal chloroplast development with disrupted granum-stroma thylakoid membranes and disrupted photosynthetic electron flow (PubMed:27462450). Reduced accumulation of rbcL mRNA and less production of Rubisco large subunit (LSU) (PubMed:24053212). Impaired biogenesis of NDH, PSI (including PsaA, PsaB, PsaD, PsaF, PsaL, PsaG, PsaK and NdhH) and Cytb(6)f (including PetA, PetB, PetC and PetD) complexes; this phenotypes are reversed by Ycf1 overexpression (PubMed:27462450, PubMed:30962391). Inhibited induction of non-photochemical quenching (NPQ) (PubMed:27462450). Structural changes to target RNAs (PubMed:30962391).</text>
</comment>
<comment type="similarity">
    <text evidence="11">Belongs to the bacterial ribosomal protein bS1 family.</text>
</comment>
<comment type="sequence caution" evidence="11">
    <conflict type="frameshift">
        <sequence resource="EMBL-CDS" id="BAD95265"/>
    </conflict>
</comment>
<comment type="online information" name="Seed defective Arabidopsis mutants">
    <link uri="http://seedgenes.org/MutantList"/>
</comment>
<sequence length="500" mass="56326">MQTLLCQPCKSLPILTASSSSSLIRSSGDVRECIDFRASEKVSKFQFHVTLSPFAFRGFSICREFAVRGAYGIRFCSREDVSGVGNGGIVAEEEIELLNKPNPLPKSENEESGKADDDAILEPFLKFFKPEEEGEGIESEVSDETDRVSVEYYDPKPGDFVVGVVVSGNENKLDVNIGADMLGTMLTKEILPLYDKELDYLLCDLKYDAEEFLVNGKMGIVKDDDEGVEIAEFARQGRPVVEIGTVVFAEVLGRTLSGRPLLSSRRYFRRIAWHRVRQIKQLNEPIEVKITEWNTGGLLTRIEGLRAFIPKQELVKKVNTFTELKENVGRRFLVQITRLNEDKNDLILSEKVAWEKLYLREGTLLEGTVVKILPYGAQVKLGDSSRSGLLHISNITRRRIGSVSDVLQVDESVKVLVVKSLFPDKISLSIADLESEPGLFISDREKVFTEAEEMAKKYREKMPLVATSPISDRPPITSSFPQGKDEEIYANWEWFKFESQ</sequence>
<evidence type="ECO:0000255" key="1"/>
<evidence type="ECO:0000255" key="2">
    <source>
        <dbReference type="PROSITE-ProRule" id="PRU00180"/>
    </source>
</evidence>
<evidence type="ECO:0000269" key="3">
    <source>
    </source>
</evidence>
<evidence type="ECO:0000269" key="4">
    <source>
    </source>
</evidence>
<evidence type="ECO:0000269" key="5">
    <source>
    </source>
</evidence>
<evidence type="ECO:0000269" key="6">
    <source>
    </source>
</evidence>
<evidence type="ECO:0000303" key="7">
    <source>
    </source>
</evidence>
<evidence type="ECO:0000303" key="8">
    <source>
    </source>
</evidence>
<evidence type="ECO:0000303" key="9">
    <source>
    </source>
</evidence>
<evidence type="ECO:0000303" key="10">
    <source>
    </source>
</evidence>
<evidence type="ECO:0000305" key="11"/>
<evidence type="ECO:0000312" key="12">
    <source>
        <dbReference type="Araport" id="AT1G71720"/>
    </source>
</evidence>
<evidence type="ECO:0000312" key="13">
    <source>
        <dbReference type="EMBL" id="AAF43225.1"/>
    </source>
</evidence>
<reference key="1">
    <citation type="journal article" date="2013" name="BMC Plant Biol.">
        <title>A novel RNA binding protein affects rbcL gene expression and is specific to bundle sheath chloroplasts in C4 plants.</title>
        <authorList>
            <person name="Bowman S.M."/>
            <person name="Patel M."/>
            <person name="Yerramsetty P."/>
            <person name="Mure C.M."/>
            <person name="Zielinski A.M."/>
            <person name="Bruenn J.A."/>
            <person name="Berry J.O."/>
        </authorList>
    </citation>
    <scope>NUCLEOTIDE SEQUENCE [MRNA] (ISOFORM 2)</scope>
    <scope>FUNCTION</scope>
    <scope>DISRUPTION PHENOTYPE</scope>
    <scope>SUBCELLULAR LOCATION</scope>
    <scope>TISSUE SPECIFICITY</scope>
    <source>
        <strain>cv. Columbia</strain>
    </source>
</reference>
<reference key="2">
    <citation type="journal article" date="2000" name="Nature">
        <title>Sequence and analysis of chromosome 1 of the plant Arabidopsis thaliana.</title>
        <authorList>
            <person name="Theologis A."/>
            <person name="Ecker J.R."/>
            <person name="Palm C.J."/>
            <person name="Federspiel N.A."/>
            <person name="Kaul S."/>
            <person name="White O."/>
            <person name="Alonso J."/>
            <person name="Altafi H."/>
            <person name="Araujo R."/>
            <person name="Bowman C.L."/>
            <person name="Brooks S.Y."/>
            <person name="Buehler E."/>
            <person name="Chan A."/>
            <person name="Chao Q."/>
            <person name="Chen H."/>
            <person name="Cheuk R.F."/>
            <person name="Chin C.W."/>
            <person name="Chung M.K."/>
            <person name="Conn L."/>
            <person name="Conway A.B."/>
            <person name="Conway A.R."/>
            <person name="Creasy T.H."/>
            <person name="Dewar K."/>
            <person name="Dunn P."/>
            <person name="Etgu P."/>
            <person name="Feldblyum T.V."/>
            <person name="Feng J.-D."/>
            <person name="Fong B."/>
            <person name="Fujii C.Y."/>
            <person name="Gill J.E."/>
            <person name="Goldsmith A.D."/>
            <person name="Haas B."/>
            <person name="Hansen N.F."/>
            <person name="Hughes B."/>
            <person name="Huizar L."/>
            <person name="Hunter J.L."/>
            <person name="Jenkins J."/>
            <person name="Johnson-Hopson C."/>
            <person name="Khan S."/>
            <person name="Khaykin E."/>
            <person name="Kim C.J."/>
            <person name="Koo H.L."/>
            <person name="Kremenetskaia I."/>
            <person name="Kurtz D.B."/>
            <person name="Kwan A."/>
            <person name="Lam B."/>
            <person name="Langin-Hooper S."/>
            <person name="Lee A."/>
            <person name="Lee J.M."/>
            <person name="Lenz C.A."/>
            <person name="Li J.H."/>
            <person name="Li Y.-P."/>
            <person name="Lin X."/>
            <person name="Liu S.X."/>
            <person name="Liu Z.A."/>
            <person name="Luros J.S."/>
            <person name="Maiti R."/>
            <person name="Marziali A."/>
            <person name="Militscher J."/>
            <person name="Miranda M."/>
            <person name="Nguyen M."/>
            <person name="Nierman W.C."/>
            <person name="Osborne B.I."/>
            <person name="Pai G."/>
            <person name="Peterson J."/>
            <person name="Pham P.K."/>
            <person name="Rizzo M."/>
            <person name="Rooney T."/>
            <person name="Rowley D."/>
            <person name="Sakano H."/>
            <person name="Salzberg S.L."/>
            <person name="Schwartz J.R."/>
            <person name="Shinn P."/>
            <person name="Southwick A.M."/>
            <person name="Sun H."/>
            <person name="Tallon L.J."/>
            <person name="Tambunga G."/>
            <person name="Toriumi M.J."/>
            <person name="Town C.D."/>
            <person name="Utterback T."/>
            <person name="Van Aken S."/>
            <person name="Vaysberg M."/>
            <person name="Vysotskaia V.S."/>
            <person name="Walker M."/>
            <person name="Wu D."/>
            <person name="Yu G."/>
            <person name="Fraser C.M."/>
            <person name="Venter J.C."/>
            <person name="Davis R.W."/>
        </authorList>
    </citation>
    <scope>NUCLEOTIDE SEQUENCE [LARGE SCALE GENOMIC DNA]</scope>
    <source>
        <strain>cv. Columbia</strain>
    </source>
</reference>
<reference key="3">
    <citation type="journal article" date="2017" name="Plant J.">
        <title>Araport11: a complete reannotation of the Arabidopsis thaliana reference genome.</title>
        <authorList>
            <person name="Cheng C.Y."/>
            <person name="Krishnakumar V."/>
            <person name="Chan A.P."/>
            <person name="Thibaud-Nissen F."/>
            <person name="Schobel S."/>
            <person name="Town C.D."/>
        </authorList>
    </citation>
    <scope>GENOME REANNOTATION</scope>
    <source>
        <strain>cv. Columbia</strain>
    </source>
</reference>
<reference key="4">
    <citation type="submission" date="2005-03" db="EMBL/GenBank/DDBJ databases">
        <title>Large-scale analysis of RIKEN Arabidopsis full-length (RAFL) cDNAs.</title>
        <authorList>
            <person name="Totoki Y."/>
            <person name="Seki M."/>
            <person name="Ishida J."/>
            <person name="Nakajima M."/>
            <person name="Enju A."/>
            <person name="Kamiya A."/>
            <person name="Narusaka M."/>
            <person name="Shin-i T."/>
            <person name="Nakagawa M."/>
            <person name="Sakamoto N."/>
            <person name="Oishi K."/>
            <person name="Kohara Y."/>
            <person name="Kobayashi M."/>
            <person name="Toyoda A."/>
            <person name="Sakaki Y."/>
            <person name="Sakurai T."/>
            <person name="Iida K."/>
            <person name="Akiyama K."/>
            <person name="Satou M."/>
            <person name="Toyoda T."/>
            <person name="Konagaya A."/>
            <person name="Carninci P."/>
            <person name="Kawai J."/>
            <person name="Hayashizaki Y."/>
            <person name="Shinozaki K."/>
        </authorList>
    </citation>
    <scope>NUCLEOTIDE SEQUENCE [LARGE SCALE MRNA]</scope>
    <source>
        <strain>cv. Columbia</strain>
    </source>
</reference>
<reference key="5">
    <citation type="journal article" date="2011" name="Plant Physiol.">
        <title>Identification of nuclear genes encoding chloroplast-localized proteins required for embryo development in Arabidopsis.</title>
        <authorList>
            <person name="Bryant N."/>
            <person name="Lloyd J."/>
            <person name="Sweeney C."/>
            <person name="Myouga F."/>
            <person name="Meinke D."/>
        </authorList>
    </citation>
    <scope>FUNCTION [LARGE SCALE ANALYSIS]</scope>
    <scope>DISRUPTION PHENOTYPE [LARGE SCALE ANALYSIS]</scope>
    <source>
        <strain>cv. Landsberg erecta</strain>
    </source>
</reference>
<reference key="6">
    <citation type="journal article" date="2016" name="BMC Evol. Biol.">
        <title>Evolution of RLSB, a nuclear-encoded S1 domain RNA binding protein associated with post-transcriptional regulation of plastid-encoded rbcL mRNA in vascular plants.</title>
        <authorList>
            <person name="Yerramsetty P."/>
            <person name="Stata M."/>
            <person name="Siford R."/>
            <person name="Sage T.L."/>
            <person name="Sage R.F."/>
            <person name="Wong G.K.-S."/>
            <person name="Albert V.A."/>
            <person name="Berry J.O."/>
        </authorList>
    </citation>
    <scope>GENE FAMILY</scope>
</reference>
<reference key="7">
    <citation type="journal article" date="2016" name="Cell Discov.">
        <title>PBR1 selectively controls biogenesis of photosynthetic complexes by modulating translation of the large chloroplast gene Ycf1 in Arabidopsis.</title>
        <authorList>
            <person name="Yang X.-F."/>
            <person name="Wang Y.-T."/>
            <person name="Chen S.-T."/>
            <person name="Li J.-K."/>
            <person name="Shen H.-T."/>
            <person name="Guo F.-Q."/>
        </authorList>
    </citation>
    <scope>FUNCTION</scope>
    <scope>DISRUPTION PHENOTYPE</scope>
    <scope>INDUCTION BY LIGHT</scope>
</reference>
<reference key="8">
    <citation type="journal article" date="2019" name="Plant Cell">
        <title>An RNA Chaperone-Like Protein Plays Critical Roles in Chloroplast mRNA Stability and Translation in Arabidopsis and Maize.</title>
        <authorList>
            <person name="Jiang J."/>
            <person name="Chai X."/>
            <person name="Manavski N."/>
            <person name="Williams-Carrier R."/>
            <person name="He B."/>
            <person name="Brachmann A."/>
            <person name="Ji D."/>
            <person name="Ouyang M."/>
            <person name="Liu Y."/>
            <person name="Barkan A."/>
            <person name="Meurer J."/>
            <person name="Zhang L."/>
            <person name="Chi W."/>
        </authorList>
    </citation>
    <scope>FUNCTION</scope>
    <scope>DISRUPTION PHENOTYPE</scope>
    <scope>INTERACTION WITH CRP1 AND PRFB3</scope>
    <scope>TISSUE SPECIFICITY</scope>
    <scope>SUBCELLULAR LOCATION</scope>
    <source>
        <strain>cv. Columbia</strain>
    </source>
</reference>
<keyword id="KW-0025">Alternative splicing</keyword>
<keyword id="KW-0150">Chloroplast</keyword>
<keyword id="KW-0934">Plastid</keyword>
<keyword id="KW-1185">Reference proteome</keyword>
<keyword id="KW-0677">Repeat</keyword>
<keyword id="KW-0809">Transit peptide</keyword>
<protein>
    <recommendedName>
        <fullName evidence="7">Protein PIGMENT DEFECTIVE 338, chloroplastic</fullName>
    </recommendedName>
    <alternativeName>
        <fullName evidence="10">Protein PETB/PETD STABILIZING FACTOR</fullName>
    </alternativeName>
    <alternativeName>
        <fullName evidence="9">Protein PHOTOSYSTEM BIOGENESIS REGULATOR 1</fullName>
    </alternativeName>
    <alternativeName>
        <fullName evidence="8">Protein rbcL RNA S1-binding domain</fullName>
    </alternativeName>
</protein>
<name>PD338_ARATH</name>
<proteinExistence type="evidence at protein level"/>